<geneLocation type="mitochondrion"/>
<accession>P92698</accession>
<keyword id="KW-0249">Electron transport</keyword>
<keyword id="KW-0472">Membrane</keyword>
<keyword id="KW-0496">Mitochondrion</keyword>
<keyword id="KW-0999">Mitochondrion inner membrane</keyword>
<keyword id="KW-0520">NAD</keyword>
<keyword id="KW-1185">Reference proteome</keyword>
<keyword id="KW-0679">Respiratory chain</keyword>
<keyword id="KW-1278">Translocase</keyword>
<keyword id="KW-0812">Transmembrane</keyword>
<keyword id="KW-1133">Transmembrane helix</keyword>
<keyword id="KW-0813">Transport</keyword>
<keyword id="KW-0830">Ubiquinone</keyword>
<comment type="function">
    <text evidence="1">Core subunit of the mitochondrial membrane respiratory chain NADH dehydrogenase (Complex I) which catalyzes electron transfer from NADH through the respiratory chain, using ubiquinone as an electron acceptor. Essential for the catalytic activity and assembly of complex I.</text>
</comment>
<comment type="catalytic activity">
    <reaction evidence="1">
        <text>a ubiquinone + NADH + 5 H(+)(in) = a ubiquinol + NAD(+) + 4 H(+)(out)</text>
        <dbReference type="Rhea" id="RHEA:29091"/>
        <dbReference type="Rhea" id="RHEA-COMP:9565"/>
        <dbReference type="Rhea" id="RHEA-COMP:9566"/>
        <dbReference type="ChEBI" id="CHEBI:15378"/>
        <dbReference type="ChEBI" id="CHEBI:16389"/>
        <dbReference type="ChEBI" id="CHEBI:17976"/>
        <dbReference type="ChEBI" id="CHEBI:57540"/>
        <dbReference type="ChEBI" id="CHEBI:57945"/>
        <dbReference type="EC" id="7.1.1.2"/>
    </reaction>
</comment>
<comment type="subunit">
    <text evidence="2">Core subunit of respiratory chain NADH dehydrogenase (Complex I) which is composed of 45 different subunits.</text>
</comment>
<comment type="subcellular location">
    <subcellularLocation>
        <location evidence="2">Mitochondrion inner membrane</location>
        <topology evidence="3">Multi-pass membrane protein</topology>
    </subcellularLocation>
</comment>
<comment type="similarity">
    <text evidence="4">Belongs to the complex I subunit 4 family.</text>
</comment>
<dbReference type="EC" id="7.1.1.2" evidence="1"/>
<dbReference type="EMBL" id="X97707">
    <property type="protein sequence ID" value="CAA66292.1"/>
    <property type="molecule type" value="Genomic_DNA"/>
</dbReference>
<dbReference type="RefSeq" id="NP_007844.1">
    <property type="nucleotide sequence ID" value="NC_002083.1"/>
</dbReference>
<dbReference type="SMR" id="P92698"/>
<dbReference type="FunCoup" id="P92698">
    <property type="interactions" value="272"/>
</dbReference>
<dbReference type="STRING" id="9601.ENSPPYP00000023448"/>
<dbReference type="Ensembl" id="ENSPPYT00000024446.1">
    <property type="protein sequence ID" value="ENSPPYP00000023448.1"/>
    <property type="gene ID" value="ENSPPYG00000020967.1"/>
</dbReference>
<dbReference type="GeneID" id="808481"/>
<dbReference type="KEGG" id="pon:808481"/>
<dbReference type="CTD" id="4538"/>
<dbReference type="eggNOG" id="KOG4845">
    <property type="taxonomic scope" value="Eukaryota"/>
</dbReference>
<dbReference type="GeneTree" id="ENSGT00730000111316"/>
<dbReference type="HOGENOM" id="CLU_007100_4_0_1"/>
<dbReference type="InParanoid" id="P92698"/>
<dbReference type="OMA" id="ITRWGNQ"/>
<dbReference type="TreeFam" id="TF343520"/>
<dbReference type="Proteomes" id="UP000001595">
    <property type="component" value="Mitochondrion"/>
</dbReference>
<dbReference type="GO" id="GO:0005743">
    <property type="term" value="C:mitochondrial inner membrane"/>
    <property type="evidence" value="ECO:0000250"/>
    <property type="project" value="UniProtKB"/>
</dbReference>
<dbReference type="GO" id="GO:0045271">
    <property type="term" value="C:respiratory chain complex I"/>
    <property type="evidence" value="ECO:0007669"/>
    <property type="project" value="Ensembl"/>
</dbReference>
<dbReference type="GO" id="GO:0008137">
    <property type="term" value="F:NADH dehydrogenase (ubiquinone) activity"/>
    <property type="evidence" value="ECO:0000250"/>
    <property type="project" value="UniProtKB"/>
</dbReference>
<dbReference type="GO" id="GO:0048039">
    <property type="term" value="F:ubiquinone binding"/>
    <property type="evidence" value="ECO:0007669"/>
    <property type="project" value="TreeGrafter"/>
</dbReference>
<dbReference type="GO" id="GO:0015990">
    <property type="term" value="P:electron transport coupled proton transport"/>
    <property type="evidence" value="ECO:0007669"/>
    <property type="project" value="TreeGrafter"/>
</dbReference>
<dbReference type="GO" id="GO:0006120">
    <property type="term" value="P:mitochondrial electron transport, NADH to ubiquinone"/>
    <property type="evidence" value="ECO:0000250"/>
    <property type="project" value="UniProtKB"/>
</dbReference>
<dbReference type="GO" id="GO:0032981">
    <property type="term" value="P:mitochondrial respiratory chain complex I assembly"/>
    <property type="evidence" value="ECO:0000250"/>
    <property type="project" value="UniProtKB"/>
</dbReference>
<dbReference type="InterPro" id="IPR000260">
    <property type="entry name" value="NADH4_N"/>
</dbReference>
<dbReference type="InterPro" id="IPR010227">
    <property type="entry name" value="NADH_Q_OxRdtase_chainM/4"/>
</dbReference>
<dbReference type="InterPro" id="IPR003918">
    <property type="entry name" value="NADH_UbQ_OxRdtase"/>
</dbReference>
<dbReference type="InterPro" id="IPR001750">
    <property type="entry name" value="ND/Mrp_TM"/>
</dbReference>
<dbReference type="NCBIfam" id="TIGR01972">
    <property type="entry name" value="NDH_I_M"/>
    <property type="match status" value="1"/>
</dbReference>
<dbReference type="PANTHER" id="PTHR43507">
    <property type="entry name" value="NADH-UBIQUINONE OXIDOREDUCTASE CHAIN 4"/>
    <property type="match status" value="1"/>
</dbReference>
<dbReference type="PANTHER" id="PTHR43507:SF20">
    <property type="entry name" value="NADH-UBIQUINONE OXIDOREDUCTASE CHAIN 4"/>
    <property type="match status" value="1"/>
</dbReference>
<dbReference type="Pfam" id="PF01059">
    <property type="entry name" value="Oxidored_q5_N"/>
    <property type="match status" value="1"/>
</dbReference>
<dbReference type="Pfam" id="PF00361">
    <property type="entry name" value="Proton_antipo_M"/>
    <property type="match status" value="1"/>
</dbReference>
<dbReference type="PRINTS" id="PR01437">
    <property type="entry name" value="NUOXDRDTASE4"/>
</dbReference>
<protein>
    <recommendedName>
        <fullName>NADH-ubiquinone oxidoreductase chain 4</fullName>
        <ecNumber evidence="1">7.1.1.2</ecNumber>
    </recommendedName>
    <alternativeName>
        <fullName>NADH dehydrogenase subunit 4</fullName>
    </alternativeName>
</protein>
<sequence>MLKLIIPTIMLLPLTWLSKTHMIWINTTTHSLIISSIPLLFLNQTNSNLYSYSLLFSSDPLSTPLLMLTTWLLPLMIMASQHHLSNEPPSRKKLYLTMLISLQISLIMTFTATELIMFYILFETTLIPTLVIITRWGNQPERLNAGTYFLFYTLVGSLPLLIALIHTYNTLGSLNIVLLTLTARELTDSWSNSLMWLAYTMAFMVKMPLYGLHLWLPKAHVEAPIAGSMVLAAVLLKLGGYGMMRLIPILNPLTKHMAYPFIMLSLWGMIMTSSICLRQTDLKSLIAYSSVSHMALVVAAILIQTPWSFTGATTLMIAHGLTSSLLFCLANSNYERTHSRIMILSQGLQTLLPLMALWWLLASLTNLALPPTINLLGELSVLMAMFSWSNITILLTGLNMLITTLYSLYMFTTTQRGTPTHHTNNMKPSFTRENTLMLMHLSPILLLSLNPSIIAGFAY</sequence>
<proteinExistence type="inferred from homology"/>
<name>NU4M_PONAB</name>
<reference key="1">
    <citation type="journal article" date="1996" name="J. Mol. Evol.">
        <title>The mitochondrial DNA molecule of Sumatran orangutan and a molecular proposal for two (Bornean and Sumatran) species of orangutan.</title>
        <authorList>
            <person name="Xu X."/>
            <person name="Arnason U."/>
        </authorList>
    </citation>
    <scope>NUCLEOTIDE SEQUENCE [LARGE SCALE GENOMIC DNA]</scope>
</reference>
<evidence type="ECO:0000250" key="1">
    <source>
        <dbReference type="UniProtKB" id="P03905"/>
    </source>
</evidence>
<evidence type="ECO:0000250" key="2">
    <source>
        <dbReference type="UniProtKB" id="P03910"/>
    </source>
</evidence>
<evidence type="ECO:0000255" key="3"/>
<evidence type="ECO:0000305" key="4"/>
<gene>
    <name type="primary">MT-ND4</name>
    <name type="synonym">MTND4</name>
    <name type="synonym">NADH4</name>
    <name type="synonym">ND4</name>
</gene>
<feature type="chain" id="PRO_0000117974" description="NADH-ubiquinone oxidoreductase chain 4">
    <location>
        <begin position="1"/>
        <end position="459"/>
    </location>
</feature>
<feature type="transmembrane region" description="Helical" evidence="3">
    <location>
        <begin position="20"/>
        <end position="42"/>
    </location>
</feature>
<feature type="transmembrane region" description="Helical" evidence="3">
    <location>
        <begin position="60"/>
        <end position="80"/>
    </location>
</feature>
<feature type="transmembrane region" description="Helical" evidence="3">
    <location>
        <begin position="94"/>
        <end position="110"/>
    </location>
</feature>
<feature type="transmembrane region" description="Helical" evidence="3">
    <location>
        <begin position="113"/>
        <end position="133"/>
    </location>
</feature>
<feature type="transmembrane region" description="Helical" evidence="3">
    <location>
        <begin position="145"/>
        <end position="165"/>
    </location>
</feature>
<feature type="transmembrane region" description="Helical" evidence="3">
    <location>
        <begin position="196"/>
        <end position="216"/>
    </location>
</feature>
<feature type="transmembrane region" description="Helical" evidence="3">
    <location>
        <begin position="224"/>
        <end position="244"/>
    </location>
</feature>
<feature type="transmembrane region" description="Helical" evidence="3">
    <location>
        <begin position="257"/>
        <end position="277"/>
    </location>
</feature>
<feature type="transmembrane region" description="Helical" evidence="3">
    <location>
        <begin position="284"/>
        <end position="303"/>
    </location>
</feature>
<feature type="transmembrane region" description="Helical" evidence="3">
    <location>
        <begin position="308"/>
        <end position="330"/>
    </location>
</feature>
<feature type="transmembrane region" description="Helical" evidence="3">
    <location>
        <begin position="341"/>
        <end position="361"/>
    </location>
</feature>
<feature type="transmembrane region" description="Helical" evidence="3">
    <location>
        <begin position="391"/>
        <end position="411"/>
    </location>
</feature>
<feature type="transmembrane region" description="Helical" evidence="3">
    <location>
        <begin position="437"/>
        <end position="457"/>
    </location>
</feature>
<organism>
    <name type="scientific">Pongo abelii</name>
    <name type="common">Sumatran orangutan</name>
    <name type="synonym">Pongo pygmaeus abelii</name>
    <dbReference type="NCBI Taxonomy" id="9601"/>
    <lineage>
        <taxon>Eukaryota</taxon>
        <taxon>Metazoa</taxon>
        <taxon>Chordata</taxon>
        <taxon>Craniata</taxon>
        <taxon>Vertebrata</taxon>
        <taxon>Euteleostomi</taxon>
        <taxon>Mammalia</taxon>
        <taxon>Eutheria</taxon>
        <taxon>Euarchontoglires</taxon>
        <taxon>Primates</taxon>
        <taxon>Haplorrhini</taxon>
        <taxon>Catarrhini</taxon>
        <taxon>Hominidae</taxon>
        <taxon>Pongo</taxon>
    </lineage>
</organism>